<keyword id="KW-0997">Cell inner membrane</keyword>
<keyword id="KW-1003">Cell membrane</keyword>
<keyword id="KW-0472">Membrane</keyword>
<keyword id="KW-0520">NAD</keyword>
<keyword id="KW-0874">Quinone</keyword>
<keyword id="KW-1278">Translocase</keyword>
<keyword id="KW-0812">Transmembrane</keyword>
<keyword id="KW-1133">Transmembrane helix</keyword>
<keyword id="KW-0813">Transport</keyword>
<keyword id="KW-0830">Ubiquinone</keyword>
<proteinExistence type="inferred from homology"/>
<evidence type="ECO:0000255" key="1">
    <source>
        <dbReference type="HAMAP-Rule" id="MF_00445"/>
    </source>
</evidence>
<feature type="chain" id="PRO_1000145876" description="NADH-quinone oxidoreductase subunit N">
    <location>
        <begin position="1"/>
        <end position="485"/>
    </location>
</feature>
<feature type="transmembrane region" description="Helical" evidence="1">
    <location>
        <begin position="8"/>
        <end position="28"/>
    </location>
</feature>
<feature type="transmembrane region" description="Helical" evidence="1">
    <location>
        <begin position="35"/>
        <end position="55"/>
    </location>
</feature>
<feature type="transmembrane region" description="Helical" evidence="1">
    <location>
        <begin position="71"/>
        <end position="91"/>
    </location>
</feature>
<feature type="transmembrane region" description="Helical" evidence="1">
    <location>
        <begin position="105"/>
        <end position="125"/>
    </location>
</feature>
<feature type="transmembrane region" description="Helical" evidence="1">
    <location>
        <begin position="127"/>
        <end position="147"/>
    </location>
</feature>
<feature type="transmembrane region" description="Helical" evidence="1">
    <location>
        <begin position="159"/>
        <end position="179"/>
    </location>
</feature>
<feature type="transmembrane region" description="Helical" evidence="1">
    <location>
        <begin position="203"/>
        <end position="223"/>
    </location>
</feature>
<feature type="transmembrane region" description="Helical" evidence="1">
    <location>
        <begin position="235"/>
        <end position="255"/>
    </location>
</feature>
<feature type="transmembrane region" description="Helical" evidence="1">
    <location>
        <begin position="271"/>
        <end position="291"/>
    </location>
</feature>
<feature type="transmembrane region" description="Helical" evidence="1">
    <location>
        <begin position="297"/>
        <end position="317"/>
    </location>
</feature>
<feature type="transmembrane region" description="Helical" evidence="1">
    <location>
        <begin position="326"/>
        <end position="346"/>
    </location>
</feature>
<feature type="transmembrane region" description="Helical" evidence="1">
    <location>
        <begin position="373"/>
        <end position="393"/>
    </location>
</feature>
<feature type="transmembrane region" description="Helical" evidence="1">
    <location>
        <begin position="408"/>
        <end position="430"/>
    </location>
</feature>
<feature type="transmembrane region" description="Helical" evidence="1">
    <location>
        <begin position="455"/>
        <end position="475"/>
    </location>
</feature>
<sequence length="485" mass="52014">MTITPQHLIALLPLLIVGLTVVVVMLSIAWRRNHFLNATLSVIGLNAALVSLWFVGQAGAMDVTPLMRVDGFAMLYTGLVQVASLATCTFAYPWLEGYNDNQEEFYLLVLIASLGGILLANANHLAALFLGIELISLPLFGLIGYAFRQKRSLEASIKYTILSAAASSFLLFGMALVYAQSGNLSFEALGKSLGDGMLHEPLLLAGFGLMIVGLGFKLSLVPFHLWTPDVYQGAPAPVSTFLATASKIAIFGVVMRLFLYAPVGDSEAVRVVLGIIAFASIIFGNLMALSQTNIKRLLGYSSISHLGYLLVALIALQSGEMSMEAVGVYLAGYLFSSLGAFGVVSLMSSPFRGPDADSLYSYRGLFWHRPVLAAVMTVMMLSLAGIPMTLGFIGKFYVLAVGVQASLWWLVAAVVVGSAIGLYYYLRVAVSLYLHAPQQPGRDAPTNWQYSAGGIVVLISALLVLVLGVWPQPLISLVQLAMPLM</sequence>
<gene>
    <name evidence="1" type="primary">nuoN</name>
    <name type="ordered locus">SG2345</name>
</gene>
<name>NUON_SALG2</name>
<reference key="1">
    <citation type="journal article" date="2008" name="Genome Res.">
        <title>Comparative genome analysis of Salmonella enteritidis PT4 and Salmonella gallinarum 287/91 provides insights into evolutionary and host adaptation pathways.</title>
        <authorList>
            <person name="Thomson N.R."/>
            <person name="Clayton D.J."/>
            <person name="Windhorst D."/>
            <person name="Vernikos G."/>
            <person name="Davidson S."/>
            <person name="Churcher C."/>
            <person name="Quail M.A."/>
            <person name="Stevens M."/>
            <person name="Jones M.A."/>
            <person name="Watson M."/>
            <person name="Barron A."/>
            <person name="Layton A."/>
            <person name="Pickard D."/>
            <person name="Kingsley R.A."/>
            <person name="Bignell A."/>
            <person name="Clark L."/>
            <person name="Harris B."/>
            <person name="Ormond D."/>
            <person name="Abdellah Z."/>
            <person name="Brooks K."/>
            <person name="Cherevach I."/>
            <person name="Chillingworth T."/>
            <person name="Woodward J."/>
            <person name="Norberczak H."/>
            <person name="Lord A."/>
            <person name="Arrowsmith C."/>
            <person name="Jagels K."/>
            <person name="Moule S."/>
            <person name="Mungall K."/>
            <person name="Saunders M."/>
            <person name="Whitehead S."/>
            <person name="Chabalgoity J.A."/>
            <person name="Maskell D."/>
            <person name="Humphreys T."/>
            <person name="Roberts M."/>
            <person name="Barrow P.A."/>
            <person name="Dougan G."/>
            <person name="Parkhill J."/>
        </authorList>
    </citation>
    <scope>NUCLEOTIDE SEQUENCE [LARGE SCALE GENOMIC DNA]</scope>
    <source>
        <strain>287/91 / NCTC 13346</strain>
    </source>
</reference>
<accession>B5RCE1</accession>
<organism>
    <name type="scientific">Salmonella gallinarum (strain 287/91 / NCTC 13346)</name>
    <dbReference type="NCBI Taxonomy" id="550538"/>
    <lineage>
        <taxon>Bacteria</taxon>
        <taxon>Pseudomonadati</taxon>
        <taxon>Pseudomonadota</taxon>
        <taxon>Gammaproteobacteria</taxon>
        <taxon>Enterobacterales</taxon>
        <taxon>Enterobacteriaceae</taxon>
        <taxon>Salmonella</taxon>
    </lineage>
</organism>
<protein>
    <recommendedName>
        <fullName evidence="1">NADH-quinone oxidoreductase subunit N</fullName>
        <ecNumber evidence="1">7.1.1.-</ecNumber>
    </recommendedName>
    <alternativeName>
        <fullName evidence="1">NADH dehydrogenase I subunit N</fullName>
    </alternativeName>
    <alternativeName>
        <fullName evidence="1">NDH-1 subunit N</fullName>
    </alternativeName>
</protein>
<dbReference type="EC" id="7.1.1.-" evidence="1"/>
<dbReference type="EMBL" id="AM933173">
    <property type="protein sequence ID" value="CAR38175.1"/>
    <property type="molecule type" value="Genomic_DNA"/>
</dbReference>
<dbReference type="RefSeq" id="WP_000156676.1">
    <property type="nucleotide sequence ID" value="NC_011274.1"/>
</dbReference>
<dbReference type="SMR" id="B5RCE1"/>
<dbReference type="KEGG" id="seg:SG2345"/>
<dbReference type="HOGENOM" id="CLU_007100_1_5_6"/>
<dbReference type="Proteomes" id="UP000008321">
    <property type="component" value="Chromosome"/>
</dbReference>
<dbReference type="GO" id="GO:0005886">
    <property type="term" value="C:plasma membrane"/>
    <property type="evidence" value="ECO:0007669"/>
    <property type="project" value="UniProtKB-SubCell"/>
</dbReference>
<dbReference type="GO" id="GO:0008137">
    <property type="term" value="F:NADH dehydrogenase (ubiquinone) activity"/>
    <property type="evidence" value="ECO:0007669"/>
    <property type="project" value="InterPro"/>
</dbReference>
<dbReference type="GO" id="GO:0050136">
    <property type="term" value="F:NADH:ubiquinone reductase (non-electrogenic) activity"/>
    <property type="evidence" value="ECO:0007669"/>
    <property type="project" value="UniProtKB-UniRule"/>
</dbReference>
<dbReference type="GO" id="GO:0048038">
    <property type="term" value="F:quinone binding"/>
    <property type="evidence" value="ECO:0007669"/>
    <property type="project" value="UniProtKB-KW"/>
</dbReference>
<dbReference type="GO" id="GO:0042773">
    <property type="term" value="P:ATP synthesis coupled electron transport"/>
    <property type="evidence" value="ECO:0007669"/>
    <property type="project" value="InterPro"/>
</dbReference>
<dbReference type="HAMAP" id="MF_00445">
    <property type="entry name" value="NDH1_NuoN_1"/>
    <property type="match status" value="1"/>
</dbReference>
<dbReference type="InterPro" id="IPR010096">
    <property type="entry name" value="NADH-Q_OxRdtase_suN/2"/>
</dbReference>
<dbReference type="InterPro" id="IPR001750">
    <property type="entry name" value="ND/Mrp_TM"/>
</dbReference>
<dbReference type="NCBIfam" id="TIGR01770">
    <property type="entry name" value="NDH_I_N"/>
    <property type="match status" value="1"/>
</dbReference>
<dbReference type="NCBIfam" id="NF004439">
    <property type="entry name" value="PRK05777.1-1"/>
    <property type="match status" value="1"/>
</dbReference>
<dbReference type="PANTHER" id="PTHR22773">
    <property type="entry name" value="NADH DEHYDROGENASE"/>
    <property type="match status" value="1"/>
</dbReference>
<dbReference type="Pfam" id="PF00361">
    <property type="entry name" value="Proton_antipo_M"/>
    <property type="match status" value="1"/>
</dbReference>
<comment type="function">
    <text evidence="1">NDH-1 shuttles electrons from NADH, via FMN and iron-sulfur (Fe-S) centers, to quinones in the respiratory chain. The immediate electron acceptor for the enzyme in this species is believed to be ubiquinone. Couples the redox reaction to proton translocation (for every two electrons transferred, four hydrogen ions are translocated across the cytoplasmic membrane), and thus conserves the redox energy in a proton gradient.</text>
</comment>
<comment type="catalytic activity">
    <reaction evidence="1">
        <text>a quinone + NADH + 5 H(+)(in) = a quinol + NAD(+) + 4 H(+)(out)</text>
        <dbReference type="Rhea" id="RHEA:57888"/>
        <dbReference type="ChEBI" id="CHEBI:15378"/>
        <dbReference type="ChEBI" id="CHEBI:24646"/>
        <dbReference type="ChEBI" id="CHEBI:57540"/>
        <dbReference type="ChEBI" id="CHEBI:57945"/>
        <dbReference type="ChEBI" id="CHEBI:132124"/>
    </reaction>
</comment>
<comment type="subunit">
    <text evidence="1">NDH-1 is composed of 13 different subunits. Subunits NuoA, H, J, K, L, M, N constitute the membrane sector of the complex.</text>
</comment>
<comment type="subcellular location">
    <subcellularLocation>
        <location evidence="1">Cell inner membrane</location>
        <topology evidence="1">Multi-pass membrane protein</topology>
    </subcellularLocation>
</comment>
<comment type="similarity">
    <text evidence="1">Belongs to the complex I subunit 2 family.</text>
</comment>